<feature type="chain" id="PRO_0000308155" description="Large ribosomal subunit protein uL1">
    <location>
        <begin position="1"/>
        <end position="215"/>
    </location>
</feature>
<name>RL1_STAMF</name>
<reference key="1">
    <citation type="journal article" date="2009" name="BMC Genomics">
        <title>The complete genome sequence of Staphylothermus marinus reveals differences in sulfur metabolism among heterotrophic Crenarchaeota.</title>
        <authorList>
            <person name="Anderson I.J."/>
            <person name="Dharmarajan L."/>
            <person name="Rodriguez J."/>
            <person name="Hooper S."/>
            <person name="Porat I."/>
            <person name="Ulrich L.E."/>
            <person name="Elkins J.G."/>
            <person name="Mavromatis K."/>
            <person name="Sun H."/>
            <person name="Land M."/>
            <person name="Lapidus A."/>
            <person name="Lucas S."/>
            <person name="Barry K."/>
            <person name="Huber H."/>
            <person name="Zhulin I.B."/>
            <person name="Whitman W.B."/>
            <person name="Mukhopadhyay B."/>
            <person name="Woese C."/>
            <person name="Bristow J."/>
            <person name="Kyrpides N."/>
        </authorList>
    </citation>
    <scope>NUCLEOTIDE SEQUENCE [LARGE SCALE GENOMIC DNA]</scope>
    <source>
        <strain>ATCC 43588 / DSM 3639 / JCM 9404 / F1</strain>
    </source>
</reference>
<reference key="2">
    <citation type="journal article" date="2009" name="Stand. Genomic Sci.">
        <title>Complete genome sequence of Staphylothermus marinus Stetter and Fiala 1986 type strain F1.</title>
        <authorList>
            <person name="Anderson I.J."/>
            <person name="Sun H."/>
            <person name="Lapidus A."/>
            <person name="Copeland A."/>
            <person name="Glavina Del Rio T."/>
            <person name="Tice H."/>
            <person name="Dalin E."/>
            <person name="Lucas S."/>
            <person name="Barry K."/>
            <person name="Land M."/>
            <person name="Richardson P."/>
            <person name="Huber H."/>
            <person name="Kyrpides N.C."/>
        </authorList>
    </citation>
    <scope>NUCLEOTIDE SEQUENCE [LARGE SCALE GENOMIC DNA]</scope>
    <source>
        <strain>ATCC 43588 / DSM 3639 / JCM 9404 / F1</strain>
    </source>
</reference>
<gene>
    <name evidence="1" type="primary">rpl1</name>
    <name type="ordered locus">Smar_1094</name>
</gene>
<evidence type="ECO:0000255" key="1">
    <source>
        <dbReference type="HAMAP-Rule" id="MF_01318"/>
    </source>
</evidence>
<evidence type="ECO:0000305" key="2"/>
<accession>A3DNI1</accession>
<keyword id="KW-1185">Reference proteome</keyword>
<keyword id="KW-0678">Repressor</keyword>
<keyword id="KW-0687">Ribonucleoprotein</keyword>
<keyword id="KW-0689">Ribosomal protein</keyword>
<keyword id="KW-0694">RNA-binding</keyword>
<keyword id="KW-0699">rRNA-binding</keyword>
<keyword id="KW-0810">Translation regulation</keyword>
<keyword id="KW-0820">tRNA-binding</keyword>
<dbReference type="EMBL" id="CP000575">
    <property type="protein sequence ID" value="ABN70191.1"/>
    <property type="molecule type" value="Genomic_DNA"/>
</dbReference>
<dbReference type="RefSeq" id="WP_011839382.1">
    <property type="nucleotide sequence ID" value="NC_009033.1"/>
</dbReference>
<dbReference type="SMR" id="A3DNI1"/>
<dbReference type="STRING" id="399550.Smar_1094"/>
<dbReference type="GeneID" id="4907442"/>
<dbReference type="KEGG" id="smr:Smar_1094"/>
<dbReference type="eggNOG" id="arCOG04289">
    <property type="taxonomic scope" value="Archaea"/>
</dbReference>
<dbReference type="HOGENOM" id="CLU_062853_4_0_2"/>
<dbReference type="OrthoDB" id="10382at2157"/>
<dbReference type="Proteomes" id="UP000000254">
    <property type="component" value="Chromosome"/>
</dbReference>
<dbReference type="GO" id="GO:0015934">
    <property type="term" value="C:large ribosomal subunit"/>
    <property type="evidence" value="ECO:0007669"/>
    <property type="project" value="InterPro"/>
</dbReference>
<dbReference type="GO" id="GO:0019843">
    <property type="term" value="F:rRNA binding"/>
    <property type="evidence" value="ECO:0007669"/>
    <property type="project" value="UniProtKB-UniRule"/>
</dbReference>
<dbReference type="GO" id="GO:0003735">
    <property type="term" value="F:structural constituent of ribosome"/>
    <property type="evidence" value="ECO:0007669"/>
    <property type="project" value="InterPro"/>
</dbReference>
<dbReference type="GO" id="GO:0000049">
    <property type="term" value="F:tRNA binding"/>
    <property type="evidence" value="ECO:0007669"/>
    <property type="project" value="UniProtKB-KW"/>
</dbReference>
<dbReference type="GO" id="GO:0006417">
    <property type="term" value="P:regulation of translation"/>
    <property type="evidence" value="ECO:0007669"/>
    <property type="project" value="UniProtKB-KW"/>
</dbReference>
<dbReference type="GO" id="GO:0006412">
    <property type="term" value="P:translation"/>
    <property type="evidence" value="ECO:0007669"/>
    <property type="project" value="UniProtKB-UniRule"/>
</dbReference>
<dbReference type="CDD" id="cd00403">
    <property type="entry name" value="Ribosomal_L1"/>
    <property type="match status" value="1"/>
</dbReference>
<dbReference type="FunFam" id="3.40.50.790:FF:000005">
    <property type="entry name" value="50S ribosomal protein L1"/>
    <property type="match status" value="1"/>
</dbReference>
<dbReference type="Gene3D" id="3.30.190.20">
    <property type="match status" value="1"/>
</dbReference>
<dbReference type="Gene3D" id="3.40.50.790">
    <property type="match status" value="1"/>
</dbReference>
<dbReference type="HAMAP" id="MF_01318_A">
    <property type="entry name" value="Ribosomal_uL1_A"/>
    <property type="match status" value="1"/>
</dbReference>
<dbReference type="InterPro" id="IPR002143">
    <property type="entry name" value="Ribosomal_uL1"/>
</dbReference>
<dbReference type="InterPro" id="IPR023674">
    <property type="entry name" value="Ribosomal_uL1-like"/>
</dbReference>
<dbReference type="InterPro" id="IPR028364">
    <property type="entry name" value="Ribosomal_uL1/biogenesis"/>
</dbReference>
<dbReference type="InterPro" id="IPR016095">
    <property type="entry name" value="Ribosomal_uL1_3-a/b-sand"/>
</dbReference>
<dbReference type="InterPro" id="IPR023669">
    <property type="entry name" value="Ribosomal_uL1_arc"/>
</dbReference>
<dbReference type="InterPro" id="IPR023673">
    <property type="entry name" value="Ribosomal_uL1_CS"/>
</dbReference>
<dbReference type="NCBIfam" id="NF003244">
    <property type="entry name" value="PRK04203.1"/>
    <property type="match status" value="1"/>
</dbReference>
<dbReference type="PANTHER" id="PTHR36427">
    <property type="entry name" value="54S RIBOSOMAL PROTEIN L1, MITOCHONDRIAL"/>
    <property type="match status" value="1"/>
</dbReference>
<dbReference type="PANTHER" id="PTHR36427:SF3">
    <property type="entry name" value="LARGE RIBOSOMAL SUBUNIT PROTEIN UL1M"/>
    <property type="match status" value="1"/>
</dbReference>
<dbReference type="Pfam" id="PF00687">
    <property type="entry name" value="Ribosomal_L1"/>
    <property type="match status" value="1"/>
</dbReference>
<dbReference type="PIRSF" id="PIRSF002155">
    <property type="entry name" value="Ribosomal_L1"/>
    <property type="match status" value="1"/>
</dbReference>
<dbReference type="SUPFAM" id="SSF56808">
    <property type="entry name" value="Ribosomal protein L1"/>
    <property type="match status" value="1"/>
</dbReference>
<dbReference type="PROSITE" id="PS01199">
    <property type="entry name" value="RIBOSOMAL_L1"/>
    <property type="match status" value="1"/>
</dbReference>
<protein>
    <recommendedName>
        <fullName evidence="1">Large ribosomal subunit protein uL1</fullName>
    </recommendedName>
    <alternativeName>
        <fullName evidence="2">50S ribosomal protein L1</fullName>
    </alternativeName>
</protein>
<proteinExistence type="inferred from homology"/>
<comment type="function">
    <text evidence="1">Binds directly to 23S rRNA. Probably involved in E site tRNA release.</text>
</comment>
<comment type="function">
    <text evidence="1">Protein L1 is also a translational repressor protein, it controls the translation of its operon by binding to its mRNA.</text>
</comment>
<comment type="subunit">
    <text evidence="1">Part of the 50S ribosomal subunit.</text>
</comment>
<comment type="similarity">
    <text evidence="1">Belongs to the universal ribosomal protein uL1 family.</text>
</comment>
<sequence>MPLPSKEELKEAIVKAVQYSPKRNFKQSVELIVVLKDVDPRSPEGRIRETIFLPKGLGKDKIICVVADGEMAEKARAGGAHRVITRDELLALSKKDAKKVAQECDWVLVRTDLMANAGRILGPALGPRGKIPVPVPPAADIVSVMNRYKSAILLRNKDQPQLMTRIGTEDMNPEDLVINAQTILSRLETKLPNGAHNIAKIVVKTTMGPPIEVMG</sequence>
<organism>
    <name type="scientific">Staphylothermus marinus (strain ATCC 43588 / DSM 3639 / JCM 9404 / F1)</name>
    <dbReference type="NCBI Taxonomy" id="399550"/>
    <lineage>
        <taxon>Archaea</taxon>
        <taxon>Thermoproteota</taxon>
        <taxon>Thermoprotei</taxon>
        <taxon>Desulfurococcales</taxon>
        <taxon>Desulfurococcaceae</taxon>
        <taxon>Staphylothermus</taxon>
    </lineage>
</organism>